<protein>
    <recommendedName>
        <fullName evidence="1">Valine--tRNA ligase</fullName>
        <ecNumber evidence="1">6.1.1.9</ecNumber>
    </recommendedName>
    <alternativeName>
        <fullName evidence="1">Valyl-tRNA synthetase</fullName>
        <shortName evidence="1">ValRS</shortName>
    </alternativeName>
</protein>
<dbReference type="EC" id="6.1.1.9" evidence="1"/>
<dbReference type="EMBL" id="AE016830">
    <property type="protein sequence ID" value="AAO82619.1"/>
    <property type="molecule type" value="Genomic_DNA"/>
</dbReference>
<dbReference type="RefSeq" id="NP_816549.1">
    <property type="nucleotide sequence ID" value="NC_004668.1"/>
</dbReference>
<dbReference type="RefSeq" id="WP_002387315.1">
    <property type="nucleotide sequence ID" value="NZ_KE136524.1"/>
</dbReference>
<dbReference type="SMR" id="Q82ZW6"/>
<dbReference type="STRING" id="226185.EF_2931"/>
<dbReference type="EnsemblBacteria" id="AAO82619">
    <property type="protein sequence ID" value="AAO82619"/>
    <property type="gene ID" value="EF_2931"/>
</dbReference>
<dbReference type="KEGG" id="efa:EF2931"/>
<dbReference type="PATRIC" id="fig|226185.45.peg.644"/>
<dbReference type="eggNOG" id="COG0525">
    <property type="taxonomic scope" value="Bacteria"/>
</dbReference>
<dbReference type="HOGENOM" id="CLU_001493_0_2_9"/>
<dbReference type="Proteomes" id="UP000001415">
    <property type="component" value="Chromosome"/>
</dbReference>
<dbReference type="GO" id="GO:0005829">
    <property type="term" value="C:cytosol"/>
    <property type="evidence" value="ECO:0007669"/>
    <property type="project" value="TreeGrafter"/>
</dbReference>
<dbReference type="GO" id="GO:0002161">
    <property type="term" value="F:aminoacyl-tRNA deacylase activity"/>
    <property type="evidence" value="ECO:0007669"/>
    <property type="project" value="InterPro"/>
</dbReference>
<dbReference type="GO" id="GO:0005524">
    <property type="term" value="F:ATP binding"/>
    <property type="evidence" value="ECO:0007669"/>
    <property type="project" value="UniProtKB-UniRule"/>
</dbReference>
<dbReference type="GO" id="GO:0004832">
    <property type="term" value="F:valine-tRNA ligase activity"/>
    <property type="evidence" value="ECO:0007669"/>
    <property type="project" value="UniProtKB-UniRule"/>
</dbReference>
<dbReference type="GO" id="GO:0006438">
    <property type="term" value="P:valyl-tRNA aminoacylation"/>
    <property type="evidence" value="ECO:0007669"/>
    <property type="project" value="UniProtKB-UniRule"/>
</dbReference>
<dbReference type="CDD" id="cd07962">
    <property type="entry name" value="Anticodon_Ia_Val"/>
    <property type="match status" value="1"/>
</dbReference>
<dbReference type="CDD" id="cd00817">
    <property type="entry name" value="ValRS_core"/>
    <property type="match status" value="1"/>
</dbReference>
<dbReference type="FunFam" id="1.10.287.380:FF:000001">
    <property type="entry name" value="Valine--tRNA ligase"/>
    <property type="match status" value="1"/>
</dbReference>
<dbReference type="FunFam" id="1.10.730.10:FF:000014">
    <property type="entry name" value="Valine--tRNA ligase"/>
    <property type="match status" value="1"/>
</dbReference>
<dbReference type="FunFam" id="3.40.50.620:FF:000032">
    <property type="entry name" value="Valine--tRNA ligase"/>
    <property type="match status" value="1"/>
</dbReference>
<dbReference type="FunFam" id="3.40.50.620:FF:000098">
    <property type="entry name" value="Valine--tRNA ligase"/>
    <property type="match status" value="1"/>
</dbReference>
<dbReference type="FunFam" id="3.90.740.10:FF:000005">
    <property type="entry name" value="Valine--tRNA ligase, mitochondrial"/>
    <property type="match status" value="1"/>
</dbReference>
<dbReference type="Gene3D" id="3.40.50.620">
    <property type="entry name" value="HUPs"/>
    <property type="match status" value="2"/>
</dbReference>
<dbReference type="Gene3D" id="1.10.730.10">
    <property type="entry name" value="Isoleucyl-tRNA Synthetase, Domain 1"/>
    <property type="match status" value="1"/>
</dbReference>
<dbReference type="Gene3D" id="1.10.287.380">
    <property type="entry name" value="Valyl-tRNA synthetase, C-terminal domain"/>
    <property type="match status" value="1"/>
</dbReference>
<dbReference type="Gene3D" id="3.90.740.10">
    <property type="entry name" value="Valyl/Leucyl/Isoleucyl-tRNA synthetase, editing domain"/>
    <property type="match status" value="2"/>
</dbReference>
<dbReference type="HAMAP" id="MF_02004">
    <property type="entry name" value="Val_tRNA_synth_type1"/>
    <property type="match status" value="1"/>
</dbReference>
<dbReference type="InterPro" id="IPR001412">
    <property type="entry name" value="aa-tRNA-synth_I_CS"/>
</dbReference>
<dbReference type="InterPro" id="IPR002300">
    <property type="entry name" value="aa-tRNA-synth_Ia"/>
</dbReference>
<dbReference type="InterPro" id="IPR033705">
    <property type="entry name" value="Anticodon_Ia_Val"/>
</dbReference>
<dbReference type="InterPro" id="IPR013155">
    <property type="entry name" value="M/V/L/I-tRNA-synth_anticd-bd"/>
</dbReference>
<dbReference type="InterPro" id="IPR014729">
    <property type="entry name" value="Rossmann-like_a/b/a_fold"/>
</dbReference>
<dbReference type="InterPro" id="IPR010978">
    <property type="entry name" value="tRNA-bd_arm"/>
</dbReference>
<dbReference type="InterPro" id="IPR009080">
    <property type="entry name" value="tRNAsynth_Ia_anticodon-bd"/>
</dbReference>
<dbReference type="InterPro" id="IPR037118">
    <property type="entry name" value="Val-tRNA_synth_C_sf"/>
</dbReference>
<dbReference type="InterPro" id="IPR019499">
    <property type="entry name" value="Val-tRNA_synth_tRNA-bd"/>
</dbReference>
<dbReference type="InterPro" id="IPR009008">
    <property type="entry name" value="Val/Leu/Ile-tRNA-synth_edit"/>
</dbReference>
<dbReference type="InterPro" id="IPR002303">
    <property type="entry name" value="Valyl-tRNA_ligase"/>
</dbReference>
<dbReference type="NCBIfam" id="NF004349">
    <property type="entry name" value="PRK05729.1"/>
    <property type="match status" value="1"/>
</dbReference>
<dbReference type="NCBIfam" id="TIGR00422">
    <property type="entry name" value="valS"/>
    <property type="match status" value="1"/>
</dbReference>
<dbReference type="PANTHER" id="PTHR11946:SF93">
    <property type="entry name" value="VALINE--TRNA LIGASE, CHLOROPLASTIC_MITOCHONDRIAL 2"/>
    <property type="match status" value="1"/>
</dbReference>
<dbReference type="PANTHER" id="PTHR11946">
    <property type="entry name" value="VALYL-TRNA SYNTHETASES"/>
    <property type="match status" value="1"/>
</dbReference>
<dbReference type="Pfam" id="PF08264">
    <property type="entry name" value="Anticodon_1"/>
    <property type="match status" value="1"/>
</dbReference>
<dbReference type="Pfam" id="PF00133">
    <property type="entry name" value="tRNA-synt_1"/>
    <property type="match status" value="1"/>
</dbReference>
<dbReference type="Pfam" id="PF10458">
    <property type="entry name" value="Val_tRNA-synt_C"/>
    <property type="match status" value="1"/>
</dbReference>
<dbReference type="PRINTS" id="PR00986">
    <property type="entry name" value="TRNASYNTHVAL"/>
</dbReference>
<dbReference type="SUPFAM" id="SSF47323">
    <property type="entry name" value="Anticodon-binding domain of a subclass of class I aminoacyl-tRNA synthetases"/>
    <property type="match status" value="1"/>
</dbReference>
<dbReference type="SUPFAM" id="SSF52374">
    <property type="entry name" value="Nucleotidylyl transferase"/>
    <property type="match status" value="1"/>
</dbReference>
<dbReference type="SUPFAM" id="SSF46589">
    <property type="entry name" value="tRNA-binding arm"/>
    <property type="match status" value="1"/>
</dbReference>
<dbReference type="SUPFAM" id="SSF50677">
    <property type="entry name" value="ValRS/IleRS/LeuRS editing domain"/>
    <property type="match status" value="1"/>
</dbReference>
<dbReference type="PROSITE" id="PS00178">
    <property type="entry name" value="AA_TRNA_LIGASE_I"/>
    <property type="match status" value="1"/>
</dbReference>
<reference key="1">
    <citation type="journal article" date="2003" name="Science">
        <title>Role of mobile DNA in the evolution of vancomycin-resistant Enterococcus faecalis.</title>
        <authorList>
            <person name="Paulsen I.T."/>
            <person name="Banerjei L."/>
            <person name="Myers G.S.A."/>
            <person name="Nelson K.E."/>
            <person name="Seshadri R."/>
            <person name="Read T.D."/>
            <person name="Fouts D.E."/>
            <person name="Eisen J.A."/>
            <person name="Gill S.R."/>
            <person name="Heidelberg J.F."/>
            <person name="Tettelin H."/>
            <person name="Dodson R.J."/>
            <person name="Umayam L.A."/>
            <person name="Brinkac L.M."/>
            <person name="Beanan M.J."/>
            <person name="Daugherty S.C."/>
            <person name="DeBoy R.T."/>
            <person name="Durkin S.A."/>
            <person name="Kolonay J.F."/>
            <person name="Madupu R."/>
            <person name="Nelson W.C."/>
            <person name="Vamathevan J.J."/>
            <person name="Tran B."/>
            <person name="Upton J."/>
            <person name="Hansen T."/>
            <person name="Shetty J."/>
            <person name="Khouri H.M."/>
            <person name="Utterback T.R."/>
            <person name="Radune D."/>
            <person name="Ketchum K.A."/>
            <person name="Dougherty B.A."/>
            <person name="Fraser C.M."/>
        </authorList>
    </citation>
    <scope>NUCLEOTIDE SEQUENCE [LARGE SCALE GENOMIC DNA]</scope>
    <source>
        <strain>ATCC 700802 / V583</strain>
    </source>
</reference>
<accession>Q82ZW6</accession>
<evidence type="ECO:0000255" key="1">
    <source>
        <dbReference type="HAMAP-Rule" id="MF_02004"/>
    </source>
</evidence>
<proteinExistence type="inferred from homology"/>
<comment type="function">
    <text evidence="1">Catalyzes the attachment of valine to tRNA(Val). As ValRS can inadvertently accommodate and process structurally similar amino acids such as threonine, to avoid such errors, it has a 'posttransfer' editing activity that hydrolyzes mischarged Thr-tRNA(Val) in a tRNA-dependent manner.</text>
</comment>
<comment type="catalytic activity">
    <reaction evidence="1">
        <text>tRNA(Val) + L-valine + ATP = L-valyl-tRNA(Val) + AMP + diphosphate</text>
        <dbReference type="Rhea" id="RHEA:10704"/>
        <dbReference type="Rhea" id="RHEA-COMP:9672"/>
        <dbReference type="Rhea" id="RHEA-COMP:9708"/>
        <dbReference type="ChEBI" id="CHEBI:30616"/>
        <dbReference type="ChEBI" id="CHEBI:33019"/>
        <dbReference type="ChEBI" id="CHEBI:57762"/>
        <dbReference type="ChEBI" id="CHEBI:78442"/>
        <dbReference type="ChEBI" id="CHEBI:78537"/>
        <dbReference type="ChEBI" id="CHEBI:456215"/>
        <dbReference type="EC" id="6.1.1.9"/>
    </reaction>
</comment>
<comment type="subunit">
    <text evidence="1">Monomer.</text>
</comment>
<comment type="subcellular location">
    <subcellularLocation>
        <location evidence="1">Cytoplasm</location>
    </subcellularLocation>
</comment>
<comment type="domain">
    <text evidence="1">ValRS has two distinct active sites: one for aminoacylation and one for editing. The misactivated threonine is translocated from the active site to the editing site.</text>
</comment>
<comment type="domain">
    <text evidence="1">The C-terminal coiled-coil domain is crucial for aminoacylation activity.</text>
</comment>
<comment type="similarity">
    <text evidence="1">Belongs to the class-I aminoacyl-tRNA synthetase family. ValS type 1 subfamily.</text>
</comment>
<sequence>MSEEKNLPTKYQPTEIEAGRYQKWLDQDLFKPSGDKKAKPYSIVIPPPNVTGKLHLGHAWDTTLQDMIIRQKRMQGFDTLWLPGMDHAGIATQAKVEEKLAQQGISRYDLGREKFVDQVWEWKEEYASHIREQWAKMGLSLDYSRERFTLDEGLSEAVRKVFVSLYEKDLIYRGEYIINWDPKAKTALSDIEVIHKDIEGAFYHMSYPLSDGSGVVEIATTRPETMLGDTAIAVHPEDERYQELIGKTVVLPLVDKEIPIIADDYVDMEFGTGVVKITPAHDPNDFEVGNRHDLPRVNVMNEDGTMNELAGKYEGMDRFAARKAIVSDLKELGRLIKIETMNHSVGHSERTGVVVEPRLSTQWFVKMGPLAEKAMKNQETEDAVEFYPPRFNQTFLRWMENVHDWVISRQLWWGHQIPAWYHKETGEMYVGMEEPADSENWVQDSDVLDTWFSSALWPFSTMGWPNEASEDYQRYFPTSTLVTGYDIIFFWVSRMIFQSLEFTGERPFQNVLIHGLIRDEQGRKMSKSLGNGIDPMDVIEKYGADALRWFLSNGSAPGQDVRFSYEKMDASWNFINKIWNASRFVIMNVEGMTAADIDFSGEKTVADRWILTRLNETVARVTELFDRFEFGEAGRQLYNFIWDDFCDWYIEMSKEILYGDNEAAKQTTRSILVYTLDQILRLLHPIMPFVTEEIWEKIPHQGESLVVAEYPVVHEEFNDEAAARGMEVLKEVIRSVRNIRAEVNTPLSKPITLLIKTNDTEVEEFLTANTSYLERFCNPEELVISREIEAPELAMSAVLTGAELFLPLAGLINIEEEIARLEKELDKWTKEVKRVQGKLSNERFVSNAPDEVVEAERAKEKDYLEKQEAVKERIAQLRSI</sequence>
<keyword id="KW-0030">Aminoacyl-tRNA synthetase</keyword>
<keyword id="KW-0067">ATP-binding</keyword>
<keyword id="KW-0175">Coiled coil</keyword>
<keyword id="KW-0963">Cytoplasm</keyword>
<keyword id="KW-0436">Ligase</keyword>
<keyword id="KW-0547">Nucleotide-binding</keyword>
<keyword id="KW-0648">Protein biosynthesis</keyword>
<keyword id="KW-1185">Reference proteome</keyword>
<organism>
    <name type="scientific">Enterococcus faecalis (strain ATCC 700802 / V583)</name>
    <dbReference type="NCBI Taxonomy" id="226185"/>
    <lineage>
        <taxon>Bacteria</taxon>
        <taxon>Bacillati</taxon>
        <taxon>Bacillota</taxon>
        <taxon>Bacilli</taxon>
        <taxon>Lactobacillales</taxon>
        <taxon>Enterococcaceae</taxon>
        <taxon>Enterococcus</taxon>
    </lineage>
</organism>
<feature type="chain" id="PRO_0000224475" description="Valine--tRNA ligase">
    <location>
        <begin position="1"/>
        <end position="880"/>
    </location>
</feature>
<feature type="coiled-coil region" evidence="1">
    <location>
        <begin position="808"/>
        <end position="879"/>
    </location>
</feature>
<feature type="short sequence motif" description="'HIGH' region">
    <location>
        <begin position="48"/>
        <end position="58"/>
    </location>
</feature>
<feature type="short sequence motif" description="'KMSKS' region">
    <location>
        <begin position="524"/>
        <end position="528"/>
    </location>
</feature>
<feature type="binding site" evidence="1">
    <location>
        <position position="527"/>
    </location>
    <ligand>
        <name>ATP</name>
        <dbReference type="ChEBI" id="CHEBI:30616"/>
    </ligand>
</feature>
<name>SYV_ENTFA</name>
<gene>
    <name evidence="1" type="primary">valS</name>
    <name type="ordered locus">EF_2931</name>
</gene>